<feature type="chain" id="PRO_1000013601" description="Ion-translocating oxidoreductase complex subunit C">
    <location>
        <begin position="1"/>
        <end position="708"/>
    </location>
</feature>
<feature type="domain" description="4Fe-4S ferredoxin-type 1" evidence="1">
    <location>
        <begin position="369"/>
        <end position="397"/>
    </location>
</feature>
<feature type="domain" description="4Fe-4S ferredoxin-type 2" evidence="1">
    <location>
        <begin position="407"/>
        <end position="436"/>
    </location>
</feature>
<feature type="region of interest" description="Disordered" evidence="2">
    <location>
        <begin position="630"/>
        <end position="682"/>
    </location>
</feature>
<feature type="binding site" evidence="1">
    <location>
        <position position="377"/>
    </location>
    <ligand>
        <name>[4Fe-4S] cluster</name>
        <dbReference type="ChEBI" id="CHEBI:49883"/>
        <label>1</label>
    </ligand>
</feature>
<feature type="binding site" evidence="1">
    <location>
        <position position="380"/>
    </location>
    <ligand>
        <name>[4Fe-4S] cluster</name>
        <dbReference type="ChEBI" id="CHEBI:49883"/>
        <label>1</label>
    </ligand>
</feature>
<feature type="binding site" evidence="1">
    <location>
        <position position="383"/>
    </location>
    <ligand>
        <name>[4Fe-4S] cluster</name>
        <dbReference type="ChEBI" id="CHEBI:49883"/>
        <label>1</label>
    </ligand>
</feature>
<feature type="binding site" evidence="1">
    <location>
        <position position="387"/>
    </location>
    <ligand>
        <name>[4Fe-4S] cluster</name>
        <dbReference type="ChEBI" id="CHEBI:49883"/>
        <label>2</label>
    </ligand>
</feature>
<feature type="binding site" evidence="1">
    <location>
        <position position="416"/>
    </location>
    <ligand>
        <name>[4Fe-4S] cluster</name>
        <dbReference type="ChEBI" id="CHEBI:49883"/>
        <label>2</label>
    </ligand>
</feature>
<feature type="binding site" evidence="1">
    <location>
        <position position="419"/>
    </location>
    <ligand>
        <name>[4Fe-4S] cluster</name>
        <dbReference type="ChEBI" id="CHEBI:49883"/>
        <label>2</label>
    </ligand>
</feature>
<feature type="binding site" evidence="1">
    <location>
        <position position="422"/>
    </location>
    <ligand>
        <name>[4Fe-4S] cluster</name>
        <dbReference type="ChEBI" id="CHEBI:49883"/>
        <label>2</label>
    </ligand>
</feature>
<feature type="binding site" evidence="1">
    <location>
        <position position="426"/>
    </location>
    <ligand>
        <name>[4Fe-4S] cluster</name>
        <dbReference type="ChEBI" id="CHEBI:49883"/>
        <label>1</label>
    </ligand>
</feature>
<protein>
    <recommendedName>
        <fullName evidence="1">Ion-translocating oxidoreductase complex subunit C</fullName>
        <ecNumber evidence="1">7.-.-.-</ecNumber>
    </recommendedName>
    <alternativeName>
        <fullName evidence="1">Rsx electron transport complex subunit C</fullName>
    </alternativeName>
</protein>
<name>RSXC_ECOK1</name>
<sequence length="708" mass="76858">MLKLFSAFRKNKIWDFNGGIHPPEMKTQSNGTPLRQVPLAQRFVIPLKQHIGAEGELCVSVGDKVLRGQPLTRGRGKMLPVHAPTSGTVTAIAPHSTAHPSALAELSVIIDADGEDCWIPRDGWADYRSRSREELIERIHQFGVAGLGGAGFPTGVKLQGGGDKIETLIINAAECEPYITADDRLMQDCAAQVVEGIRILAHILQPREILIGIEDNKPQAISMLRAVLADSHDISLRVIPTKYPSGGAKQLTYILTGKQVPHGGRSSDIGVLMQNVGTAYAVKRAVIDGEPITERVVTLTGEAIARPGNVWARLGTPVRHLLNDAEFCPSADQMVIMGGPLMGFTLPWLDVPVVKITNCLLAPSANELGEPQEEQSCIRCSACADACPADLLPQQLYWFSKGQQHDKATTHNIADCIECGACAWVCPSNIPLVQYFRQEKAEIAAIRQEEKRAAEAKARFEARQARLEREKAARLERHKSAAVQPAAKDKDAIAAALARVKEKQAQATQPIVIKAGERPDNSAIIAAREARKAQARAKQAELQQTNDAATVADPRKTAVEAAIARAKARKLEQQQANAEPEEQIDPRKAAVEAAIARAKARKLEQQQANAEPEEQIDPRKAAVEAAIARAKARKLEQQQANAEPEEQIDPRKAAVEAAIARAKARKLEQQQANAEPEEQIDPRKAAVAAAIARVQAKKAAQQKVVNED</sequence>
<gene>
    <name evidence="1" type="primary">rsxC</name>
    <name type="synonym">rnfC</name>
    <name type="ordered locus">Ecok1_15200</name>
    <name type="ORF">APECO1_712</name>
</gene>
<accession>A1ABH4</accession>
<reference key="1">
    <citation type="journal article" date="2007" name="J. Bacteriol.">
        <title>The genome sequence of avian pathogenic Escherichia coli strain O1:K1:H7 shares strong similarities with human extraintestinal pathogenic E. coli genomes.</title>
        <authorList>
            <person name="Johnson T.J."/>
            <person name="Kariyawasam S."/>
            <person name="Wannemuehler Y."/>
            <person name="Mangiamele P."/>
            <person name="Johnson S.J."/>
            <person name="Doetkott C."/>
            <person name="Skyberg J.A."/>
            <person name="Lynne A.M."/>
            <person name="Johnson J.R."/>
            <person name="Nolan L.K."/>
        </authorList>
    </citation>
    <scope>NUCLEOTIDE SEQUENCE [LARGE SCALE GENOMIC DNA]</scope>
</reference>
<dbReference type="EC" id="7.-.-.-" evidence="1"/>
<dbReference type="EMBL" id="CP000468">
    <property type="protein sequence ID" value="ABJ01014.1"/>
    <property type="molecule type" value="Genomic_DNA"/>
</dbReference>
<dbReference type="RefSeq" id="WP_000915715.1">
    <property type="nucleotide sequence ID" value="NC_008563.1"/>
</dbReference>
<dbReference type="SMR" id="A1ABH4"/>
<dbReference type="KEGG" id="ecv:APECO1_712"/>
<dbReference type="HOGENOM" id="CLU_010808_2_1_6"/>
<dbReference type="Proteomes" id="UP000008216">
    <property type="component" value="Chromosome"/>
</dbReference>
<dbReference type="GO" id="GO:0005886">
    <property type="term" value="C:plasma membrane"/>
    <property type="evidence" value="ECO:0007669"/>
    <property type="project" value="UniProtKB-SubCell"/>
</dbReference>
<dbReference type="GO" id="GO:0051539">
    <property type="term" value="F:4 iron, 4 sulfur cluster binding"/>
    <property type="evidence" value="ECO:0007669"/>
    <property type="project" value="UniProtKB-KW"/>
</dbReference>
<dbReference type="GO" id="GO:0009055">
    <property type="term" value="F:electron transfer activity"/>
    <property type="evidence" value="ECO:0007669"/>
    <property type="project" value="InterPro"/>
</dbReference>
<dbReference type="GO" id="GO:0046872">
    <property type="term" value="F:metal ion binding"/>
    <property type="evidence" value="ECO:0007669"/>
    <property type="project" value="UniProtKB-KW"/>
</dbReference>
<dbReference type="GO" id="GO:0022900">
    <property type="term" value="P:electron transport chain"/>
    <property type="evidence" value="ECO:0007669"/>
    <property type="project" value="UniProtKB-UniRule"/>
</dbReference>
<dbReference type="Gene3D" id="3.30.70.20">
    <property type="match status" value="1"/>
</dbReference>
<dbReference type="Gene3D" id="3.40.50.11540">
    <property type="entry name" value="NADH-ubiquinone oxidoreductase 51kDa subunit"/>
    <property type="match status" value="1"/>
</dbReference>
<dbReference type="HAMAP" id="MF_00461">
    <property type="entry name" value="RsxC_RnfC"/>
    <property type="match status" value="1"/>
</dbReference>
<dbReference type="InterPro" id="IPR017896">
    <property type="entry name" value="4Fe4S_Fe-S-bd"/>
</dbReference>
<dbReference type="InterPro" id="IPR017900">
    <property type="entry name" value="4Fe4S_Fe_S_CS"/>
</dbReference>
<dbReference type="InterPro" id="IPR010208">
    <property type="entry name" value="Ion_transpt_RnfC/RsxC"/>
</dbReference>
<dbReference type="InterPro" id="IPR011538">
    <property type="entry name" value="Nuo51_FMN-bd"/>
</dbReference>
<dbReference type="InterPro" id="IPR037225">
    <property type="entry name" value="Nuo51_FMN-bd_sf"/>
</dbReference>
<dbReference type="InterPro" id="IPR026902">
    <property type="entry name" value="RnfC_N"/>
</dbReference>
<dbReference type="NCBIfam" id="NF003454">
    <property type="entry name" value="PRK05035.1"/>
    <property type="match status" value="1"/>
</dbReference>
<dbReference type="NCBIfam" id="TIGR01945">
    <property type="entry name" value="rnfC"/>
    <property type="match status" value="1"/>
</dbReference>
<dbReference type="PANTHER" id="PTHR43034">
    <property type="entry name" value="ION-TRANSLOCATING OXIDOREDUCTASE COMPLEX SUBUNIT C"/>
    <property type="match status" value="1"/>
</dbReference>
<dbReference type="PANTHER" id="PTHR43034:SF2">
    <property type="entry name" value="ION-TRANSLOCATING OXIDOREDUCTASE COMPLEX SUBUNIT C"/>
    <property type="match status" value="1"/>
</dbReference>
<dbReference type="Pfam" id="PF01512">
    <property type="entry name" value="Complex1_51K"/>
    <property type="match status" value="1"/>
</dbReference>
<dbReference type="Pfam" id="PF12838">
    <property type="entry name" value="Fer4_7"/>
    <property type="match status" value="1"/>
</dbReference>
<dbReference type="Pfam" id="PF13375">
    <property type="entry name" value="RnfC_N"/>
    <property type="match status" value="1"/>
</dbReference>
<dbReference type="SUPFAM" id="SSF46548">
    <property type="entry name" value="alpha-helical ferredoxin"/>
    <property type="match status" value="1"/>
</dbReference>
<dbReference type="SUPFAM" id="SSF142019">
    <property type="entry name" value="Nqo1 FMN-binding domain-like"/>
    <property type="match status" value="1"/>
</dbReference>
<dbReference type="PROSITE" id="PS00198">
    <property type="entry name" value="4FE4S_FER_1"/>
    <property type="match status" value="2"/>
</dbReference>
<dbReference type="PROSITE" id="PS51379">
    <property type="entry name" value="4FE4S_FER_2"/>
    <property type="match status" value="2"/>
</dbReference>
<evidence type="ECO:0000255" key="1">
    <source>
        <dbReference type="HAMAP-Rule" id="MF_00461"/>
    </source>
</evidence>
<evidence type="ECO:0000256" key="2">
    <source>
        <dbReference type="SAM" id="MobiDB-lite"/>
    </source>
</evidence>
<proteinExistence type="inferred from homology"/>
<organism>
    <name type="scientific">Escherichia coli O1:K1 / APEC</name>
    <dbReference type="NCBI Taxonomy" id="405955"/>
    <lineage>
        <taxon>Bacteria</taxon>
        <taxon>Pseudomonadati</taxon>
        <taxon>Pseudomonadota</taxon>
        <taxon>Gammaproteobacteria</taxon>
        <taxon>Enterobacterales</taxon>
        <taxon>Enterobacteriaceae</taxon>
        <taxon>Escherichia</taxon>
    </lineage>
</organism>
<keyword id="KW-0004">4Fe-4S</keyword>
<keyword id="KW-0997">Cell inner membrane</keyword>
<keyword id="KW-1003">Cell membrane</keyword>
<keyword id="KW-0249">Electron transport</keyword>
<keyword id="KW-0408">Iron</keyword>
<keyword id="KW-0411">Iron-sulfur</keyword>
<keyword id="KW-0472">Membrane</keyword>
<keyword id="KW-0479">Metal-binding</keyword>
<keyword id="KW-1185">Reference proteome</keyword>
<keyword id="KW-0677">Repeat</keyword>
<keyword id="KW-1278">Translocase</keyword>
<keyword id="KW-0813">Transport</keyword>
<comment type="function">
    <text evidence="1">Part of a membrane-bound complex that couples electron transfer with translocation of ions across the membrane. Required to maintain the reduced state of SoxR.</text>
</comment>
<comment type="cofactor">
    <cofactor evidence="1">
        <name>[4Fe-4S] cluster</name>
        <dbReference type="ChEBI" id="CHEBI:49883"/>
    </cofactor>
    <text evidence="1">Binds 2 [4Fe-4S] clusters per subunit.</text>
</comment>
<comment type="subunit">
    <text evidence="1">The complex is composed of six subunits: RsxA, RsxB, RsxC, RsxD, RsxE and RsxG.</text>
</comment>
<comment type="subcellular location">
    <subcellularLocation>
        <location evidence="1">Cell inner membrane</location>
        <topology evidence="1">Peripheral membrane protein</topology>
    </subcellularLocation>
</comment>
<comment type="similarity">
    <text evidence="1">Belongs to the 4Fe4S bacterial-type ferredoxin family. RnfC subfamily.</text>
</comment>